<name>Y261_RICBR</name>
<reference key="1">
    <citation type="journal article" date="2006" name="PLoS Genet.">
        <title>Genome sequence of Rickettsia bellii illuminates the role of amoebae in gene exchanges between intracellular pathogens.</title>
        <authorList>
            <person name="Ogata H."/>
            <person name="La Scola B."/>
            <person name="Audic S."/>
            <person name="Renesto P."/>
            <person name="Blanc G."/>
            <person name="Robert C."/>
            <person name="Fournier P.-E."/>
            <person name="Claverie J.-M."/>
            <person name="Raoult D."/>
        </authorList>
    </citation>
    <scope>NUCLEOTIDE SEQUENCE [LARGE SCALE GENOMIC DNA]</scope>
    <source>
        <strain>RML369-C</strain>
    </source>
</reference>
<gene>
    <name type="ordered locus">RBE_0261</name>
</gene>
<proteinExistence type="predicted"/>
<protein>
    <recommendedName>
        <fullName>Putative ankyrin repeat protein RBE_0261</fullName>
    </recommendedName>
</protein>
<feature type="chain" id="PRO_0000280906" description="Putative ankyrin repeat protein RBE_0261">
    <location>
        <begin position="1"/>
        <end position="331"/>
    </location>
</feature>
<feature type="repeat" description="ANK">
    <location>
        <begin position="94"/>
        <end position="159"/>
    </location>
</feature>
<sequence length="331" mass="37998">MYNSTSFTIIKHYYILGIKMPKKCTQVFDEFLQVIHQNIVGEDKAIIDILNTLGVEQANDLISAAFLKHFKFMHLEHWQRYPLNIVSTDIIDEQGENVIHKCVRYDKIDFLKHIPSIGFNLGIPNKDGDTPLHLAYKKLIYAQSYPAFTKAKNTLLNIVNFKNKDEISSQFIGVLINLEYIFKPIIDFNYNVATFNHFMHHKPSAPILSDINTPINNFKPLLPRITLLRDINETSSFRDLAPPGHKRKTNSIEYNNTKKHKTISNDSHHNLYSSIENKRLDNDLNSTSKTTTTTSYNELDKLLIAFSNTNNASINNVLDTDEVALIGNKFI</sequence>
<accession>Q1RJX2</accession>
<keyword id="KW-0040">ANK repeat</keyword>
<dbReference type="EMBL" id="CP000087">
    <property type="protein sequence ID" value="ABE04342.1"/>
    <property type="molecule type" value="Genomic_DNA"/>
</dbReference>
<dbReference type="KEGG" id="rbe:RBE_0261"/>
<dbReference type="HOGENOM" id="CLU_839078_0_0_5"/>
<dbReference type="OrthoDB" id="87775at2"/>
<dbReference type="Proteomes" id="UP000001951">
    <property type="component" value="Chromosome"/>
</dbReference>
<dbReference type="Gene3D" id="1.25.40.20">
    <property type="entry name" value="Ankyrin repeat-containing domain"/>
    <property type="match status" value="1"/>
</dbReference>
<dbReference type="InterPro" id="IPR036770">
    <property type="entry name" value="Ankyrin_rpt-contain_sf"/>
</dbReference>
<dbReference type="SUPFAM" id="SSF48403">
    <property type="entry name" value="Ankyrin repeat"/>
    <property type="match status" value="1"/>
</dbReference>
<dbReference type="PROSITE" id="PS50297">
    <property type="entry name" value="ANK_REP_REGION"/>
    <property type="match status" value="1"/>
</dbReference>
<organism>
    <name type="scientific">Rickettsia bellii (strain RML369-C)</name>
    <dbReference type="NCBI Taxonomy" id="336407"/>
    <lineage>
        <taxon>Bacteria</taxon>
        <taxon>Pseudomonadati</taxon>
        <taxon>Pseudomonadota</taxon>
        <taxon>Alphaproteobacteria</taxon>
        <taxon>Rickettsiales</taxon>
        <taxon>Rickettsiaceae</taxon>
        <taxon>Rickettsieae</taxon>
        <taxon>Rickettsia</taxon>
        <taxon>belli group</taxon>
    </lineage>
</organism>